<keyword id="KW-0004">4Fe-4S</keyword>
<keyword id="KW-0249">Electron transport</keyword>
<keyword id="KW-0408">Iron</keyword>
<keyword id="KW-0411">Iron-sulfur</keyword>
<keyword id="KW-0479">Metal-binding</keyword>
<keyword id="KW-0813">Transport</keyword>
<proteinExistence type="inferred from homology"/>
<accession>Q8Z9K8</accession>
<accession>Q7CBZ2</accession>
<comment type="function">
    <text evidence="1">Could be part of an electron transfer system required for anaerobic carnitine reduction. Could be a 3Fe-4S cluster-containing protein (By similarity).</text>
</comment>
<comment type="similarity">
    <text evidence="2">Belongs to the bacterial-type ferredoxin family. FixX subfamily.</text>
</comment>
<organism>
    <name type="scientific">Salmonella typhi</name>
    <dbReference type="NCBI Taxonomy" id="90370"/>
    <lineage>
        <taxon>Bacteria</taxon>
        <taxon>Pseudomonadati</taxon>
        <taxon>Pseudomonadota</taxon>
        <taxon>Gammaproteobacteria</taxon>
        <taxon>Enterobacterales</taxon>
        <taxon>Enterobacteriaceae</taxon>
        <taxon>Salmonella</taxon>
    </lineage>
</organism>
<evidence type="ECO:0000250" key="1"/>
<evidence type="ECO:0000305" key="2"/>
<gene>
    <name type="primary">fixX</name>
    <name type="ordered locus">STY0088</name>
    <name type="ordered locus">t0079</name>
</gene>
<reference key="1">
    <citation type="journal article" date="2001" name="Nature">
        <title>Complete genome sequence of a multiple drug resistant Salmonella enterica serovar Typhi CT18.</title>
        <authorList>
            <person name="Parkhill J."/>
            <person name="Dougan G."/>
            <person name="James K.D."/>
            <person name="Thomson N.R."/>
            <person name="Pickard D."/>
            <person name="Wain J."/>
            <person name="Churcher C.M."/>
            <person name="Mungall K.L."/>
            <person name="Bentley S.D."/>
            <person name="Holden M.T.G."/>
            <person name="Sebaihia M."/>
            <person name="Baker S."/>
            <person name="Basham D."/>
            <person name="Brooks K."/>
            <person name="Chillingworth T."/>
            <person name="Connerton P."/>
            <person name="Cronin A."/>
            <person name="Davis P."/>
            <person name="Davies R.M."/>
            <person name="Dowd L."/>
            <person name="White N."/>
            <person name="Farrar J."/>
            <person name="Feltwell T."/>
            <person name="Hamlin N."/>
            <person name="Haque A."/>
            <person name="Hien T.T."/>
            <person name="Holroyd S."/>
            <person name="Jagels K."/>
            <person name="Krogh A."/>
            <person name="Larsen T.S."/>
            <person name="Leather S."/>
            <person name="Moule S."/>
            <person name="O'Gaora P."/>
            <person name="Parry C."/>
            <person name="Quail M.A."/>
            <person name="Rutherford K.M."/>
            <person name="Simmonds M."/>
            <person name="Skelton J."/>
            <person name="Stevens K."/>
            <person name="Whitehead S."/>
            <person name="Barrell B.G."/>
        </authorList>
    </citation>
    <scope>NUCLEOTIDE SEQUENCE [LARGE SCALE GENOMIC DNA]</scope>
    <source>
        <strain>CT18</strain>
    </source>
</reference>
<reference key="2">
    <citation type="journal article" date="2003" name="J. Bacteriol.">
        <title>Comparative genomics of Salmonella enterica serovar Typhi strains Ty2 and CT18.</title>
        <authorList>
            <person name="Deng W."/>
            <person name="Liou S.-R."/>
            <person name="Plunkett G. III"/>
            <person name="Mayhew G.F."/>
            <person name="Rose D.J."/>
            <person name="Burland V."/>
            <person name="Kodoyianni V."/>
            <person name="Schwartz D.C."/>
            <person name="Blattner F.R."/>
        </authorList>
    </citation>
    <scope>NUCLEOTIDE SEQUENCE [LARGE SCALE GENOMIC DNA]</scope>
    <source>
        <strain>ATCC 700931 / Ty2</strain>
    </source>
</reference>
<sequence>MTSPVNVDVKLGVNKFNVDEDSPHIILKTDPDKQALEVLVKACPAGLYKKQDDGSVRFDYAGCLECGTCRILGLDTALEKWEYPRGTFGVEFRYG</sequence>
<dbReference type="EMBL" id="AL513382">
    <property type="protein sequence ID" value="CAD01232.1"/>
    <property type="molecule type" value="Genomic_DNA"/>
</dbReference>
<dbReference type="EMBL" id="AE014613">
    <property type="protein sequence ID" value="AAO67812.1"/>
    <property type="molecule type" value="Genomic_DNA"/>
</dbReference>
<dbReference type="RefSeq" id="NP_454688.1">
    <property type="nucleotide sequence ID" value="NC_003198.1"/>
</dbReference>
<dbReference type="RefSeq" id="WP_000203737.1">
    <property type="nucleotide sequence ID" value="NZ_WSUR01000028.1"/>
</dbReference>
<dbReference type="SMR" id="Q8Z9K8"/>
<dbReference type="STRING" id="220341.gene:17584134"/>
<dbReference type="KEGG" id="stt:t0079"/>
<dbReference type="KEGG" id="sty:STY0088"/>
<dbReference type="PATRIC" id="fig|220341.7.peg.88"/>
<dbReference type="eggNOG" id="COG2440">
    <property type="taxonomic scope" value="Bacteria"/>
</dbReference>
<dbReference type="HOGENOM" id="CLU_163428_1_0_6"/>
<dbReference type="OMA" id="YGILFKF"/>
<dbReference type="OrthoDB" id="9800260at2"/>
<dbReference type="Proteomes" id="UP000000541">
    <property type="component" value="Chromosome"/>
</dbReference>
<dbReference type="Proteomes" id="UP000002670">
    <property type="component" value="Chromosome"/>
</dbReference>
<dbReference type="GO" id="GO:0051539">
    <property type="term" value="F:4 iron, 4 sulfur cluster binding"/>
    <property type="evidence" value="ECO:0007669"/>
    <property type="project" value="UniProtKB-KW"/>
</dbReference>
<dbReference type="GO" id="GO:0005506">
    <property type="term" value="F:iron ion binding"/>
    <property type="evidence" value="ECO:0007669"/>
    <property type="project" value="InterPro"/>
</dbReference>
<dbReference type="Gene3D" id="3.30.70.20">
    <property type="match status" value="1"/>
</dbReference>
<dbReference type="InterPro" id="IPR012206">
    <property type="entry name" value="Fd_FixX"/>
</dbReference>
<dbReference type="NCBIfam" id="NF011993">
    <property type="entry name" value="PRK15449.1"/>
    <property type="match status" value="1"/>
</dbReference>
<dbReference type="PANTHER" id="PTHR43082">
    <property type="entry name" value="FERREDOXIN-LIKE"/>
    <property type="match status" value="1"/>
</dbReference>
<dbReference type="PANTHER" id="PTHR43082:SF1">
    <property type="entry name" value="FERREDOXIN-LIKE PROTEIN FIXX-RELATED"/>
    <property type="match status" value="1"/>
</dbReference>
<dbReference type="PIRSF" id="PIRSF036548">
    <property type="entry name" value="Fdx_FixX"/>
    <property type="match status" value="1"/>
</dbReference>
<dbReference type="SUPFAM" id="SSF54862">
    <property type="entry name" value="4Fe-4S ferredoxins"/>
    <property type="match status" value="1"/>
</dbReference>
<protein>
    <recommendedName>
        <fullName>Ferredoxin-like protein FixX</fullName>
    </recommendedName>
</protein>
<feature type="chain" id="PRO_0000159215" description="Ferredoxin-like protein FixX">
    <location>
        <begin position="1"/>
        <end position="95"/>
    </location>
</feature>
<name>FIXX_SALTI</name>